<reference evidence="4 5" key="1">
    <citation type="journal article" date="1998" name="Science">
        <title>Genome sequence of the nematode C. elegans: a platform for investigating biology.</title>
        <authorList>
            <consortium name="The C. elegans sequencing consortium"/>
        </authorList>
    </citation>
    <scope>NUCLEOTIDE SEQUENCE [LARGE SCALE GENOMIC DNA]</scope>
    <source>
        <strain evidence="4 5">Bristol N2</strain>
    </source>
</reference>
<reference evidence="3" key="2">
    <citation type="journal article" date="2005" name="Dev. Cell">
        <title>Identification and characterization of factors required for microtubule growth and nucleation in the early C. elegans embryo.</title>
        <authorList>
            <person name="Srayko M."/>
            <person name="Kaya A."/>
            <person name="Stamford J."/>
            <person name="Hyman A.A."/>
        </authorList>
    </citation>
    <scope>FUNCTION</scope>
    <scope>DISRUPTION PHENOTYPE</scope>
</reference>
<sequence length="1163" mass="131654">MDEDAPVDESNEGIIGCLPSAVNIHHIEEIKELVDQLPIIFKLENECDETAAEVNYLRYSRLLHLYQEQPRLLDKWIPEIVANLVDLVTLIGIDVSKPRAMTPLSRESLKYLSDLCIVRGSKTIVRLLPHQVHLLDPLLQTLEYYETSQLSDHNQRNVLLMWLWIVVKNPFDLRRFDPTGDPDNVITRIMNVALHYMKWDWNSSQASAALVIAHCLSRTDGIPKVLSFLSRLLDSIKTHHENKKLLLADLILLLAILKHVDRRVLTGHIGTIHEQLSFLYPIDEKKGGLICKCLVKVVQRIGLIALKPRTCSWSYNRGKRLLEGMLDDNEEYSDEPSFSNKVNSNQSCNNEIDKENQWNDGDELENSEIVEFALMHVLEALSHSDTAVRWSAAKGVGRITVRLPNFDLATQVVGSIISSHFGEVAEYSSWHSHGACLALAELAHRGVLLPSLLEDIVPALELSLVFEDVMGRHQNGNQVRDAACYAVWALSRTYEPSMMAPYLQRLASALLCGALFDRQVNLRRAASAALQEMVGRQKNVSHGIPLIQSVDYFAVTNRQKCYEHLCVPVAEYSTYSAIILRHLITKKVVHWDEKIREQAAISLEKISEIRLENVSDDYYMEILDDFLKASCETRISPFLRHGYLLASGHLIKGLTSRGMDFSSKQTEIAWIPHILWPFCDMTTQPGALIRRTLCKFIQLVSASKKVLLLEKDKSEWLDVLLQLITDPREIIRSLAKTAVGEFVMTYLMNDEELIQKVKTRVIAAMTKCSDESERIGMGMICESLNSEAVDYEMFESLCNTILTPTSSDAKWALARQQTVFALNRISVNSSTETFNRIGQKCFETLYKAMTDYTTSANGDIGRFVREASMRAMSTILVDAKTEPPFLDEHVIKSAKYMVQQSAERISRTRECACACLKSLVKCEITGRCLPHIDLLMNIYSEPMDFISDRTVFQLKPLLDLGSEYYEQLILGIVVSAGGLAEGTQKTAKQLLLDHQREICENKPRFDHFLSTCADLFQRARKVNRIGNSFMQILPQIFGNLGIYEQCPETSESIIEMVDTMKTIAVRSSMMSRQRLSIDSLGELLNCGKKSTVYRSALTMILDTLNSQQPVLRKSAAERLYEHLCCAEESDDEVLEVLATTNWQDENDNVLKQAVAGISEKLIF</sequence>
<dbReference type="EMBL" id="BX284601">
    <property type="protein sequence ID" value="CAB01496.2"/>
    <property type="molecule type" value="Genomic_DNA"/>
</dbReference>
<dbReference type="PIR" id="T21018">
    <property type="entry name" value="T21018"/>
</dbReference>
<dbReference type="RefSeq" id="NP_001369974.1">
    <property type="nucleotide sequence ID" value="NM_001383466.2"/>
</dbReference>
<dbReference type="RefSeq" id="NP_492270.1">
    <property type="nucleotide sequence ID" value="NM_059869.3"/>
</dbReference>
<dbReference type="FunCoup" id="Q19493">
    <property type="interactions" value="3062"/>
</dbReference>
<dbReference type="STRING" id="6239.F16D3.4.1"/>
<dbReference type="PaxDb" id="6239-F16D3.4"/>
<dbReference type="PeptideAtlas" id="Q19493"/>
<dbReference type="EnsemblMetazoa" id="F16D3.4.1">
    <property type="protein sequence ID" value="F16D3.4.1"/>
    <property type="gene ID" value="WBGene00008887"/>
</dbReference>
<dbReference type="GeneID" id="172622"/>
<dbReference type="UCSC" id="F16D3.4">
    <property type="organism name" value="c. elegans"/>
</dbReference>
<dbReference type="AGR" id="WB:WBGene00008887"/>
<dbReference type="WormBase" id="F16D3.4">
    <property type="protein sequence ID" value="CE53738"/>
    <property type="gene ID" value="WBGene00008887"/>
    <property type="gene designation" value="tbcd-1"/>
</dbReference>
<dbReference type="eggNOG" id="KOG1943">
    <property type="taxonomic scope" value="Eukaryota"/>
</dbReference>
<dbReference type="GeneTree" id="ENSGT00390000017103"/>
<dbReference type="HOGENOM" id="CLU_003043_0_0_1"/>
<dbReference type="InParanoid" id="Q19493"/>
<dbReference type="OrthoDB" id="10253476at2759"/>
<dbReference type="PhylomeDB" id="Q19493"/>
<dbReference type="PRO" id="PR:Q19493"/>
<dbReference type="Proteomes" id="UP000001940">
    <property type="component" value="Chromosome I"/>
</dbReference>
<dbReference type="Bgee" id="WBGene00008887">
    <property type="expression patterns" value="Expressed in germ line (C elegans) and 4 other cell types or tissues"/>
</dbReference>
<dbReference type="GO" id="GO:0016328">
    <property type="term" value="C:lateral plasma membrane"/>
    <property type="evidence" value="ECO:0000318"/>
    <property type="project" value="GO_Central"/>
</dbReference>
<dbReference type="GO" id="GO:0005874">
    <property type="term" value="C:microtubule"/>
    <property type="evidence" value="ECO:0007669"/>
    <property type="project" value="UniProtKB-KW"/>
</dbReference>
<dbReference type="GO" id="GO:0048487">
    <property type="term" value="F:beta-tubulin binding"/>
    <property type="evidence" value="ECO:0000318"/>
    <property type="project" value="GO_Central"/>
</dbReference>
<dbReference type="GO" id="GO:0005096">
    <property type="term" value="F:GTPase activator activity"/>
    <property type="evidence" value="ECO:0000318"/>
    <property type="project" value="GO_Central"/>
</dbReference>
<dbReference type="GO" id="GO:0034333">
    <property type="term" value="P:adherens junction assembly"/>
    <property type="evidence" value="ECO:0000318"/>
    <property type="project" value="GO_Central"/>
</dbReference>
<dbReference type="GO" id="GO:0070830">
    <property type="term" value="P:bicellular tight junction assembly"/>
    <property type="evidence" value="ECO:0000318"/>
    <property type="project" value="GO_Central"/>
</dbReference>
<dbReference type="GO" id="GO:0000226">
    <property type="term" value="P:microtubule cytoskeleton organization"/>
    <property type="evidence" value="ECO:0000315"/>
    <property type="project" value="WormBase"/>
</dbReference>
<dbReference type="GO" id="GO:0007023">
    <property type="term" value="P:post-chaperonin tubulin folding pathway"/>
    <property type="evidence" value="ECO:0007669"/>
    <property type="project" value="InterPro"/>
</dbReference>
<dbReference type="GO" id="GO:0006457">
    <property type="term" value="P:protein folding"/>
    <property type="evidence" value="ECO:0000318"/>
    <property type="project" value="GO_Central"/>
</dbReference>
<dbReference type="GO" id="GO:0007021">
    <property type="term" value="P:tubulin complex assembly"/>
    <property type="evidence" value="ECO:0007669"/>
    <property type="project" value="InterPro"/>
</dbReference>
<dbReference type="FunFam" id="1.25.10.10:FF:001832">
    <property type="entry name" value="Tubulin-specific chaperone D"/>
    <property type="match status" value="1"/>
</dbReference>
<dbReference type="Gene3D" id="1.25.10.10">
    <property type="entry name" value="Leucine-rich Repeat Variant"/>
    <property type="match status" value="2"/>
</dbReference>
<dbReference type="InterPro" id="IPR011989">
    <property type="entry name" value="ARM-like"/>
</dbReference>
<dbReference type="InterPro" id="IPR016024">
    <property type="entry name" value="ARM-type_fold"/>
</dbReference>
<dbReference type="InterPro" id="IPR033162">
    <property type="entry name" value="TBCD"/>
</dbReference>
<dbReference type="InterPro" id="IPR022577">
    <property type="entry name" value="Tubulin_specific_chaperoneD_C"/>
</dbReference>
<dbReference type="PANTHER" id="PTHR12658">
    <property type="entry name" value="BETA-TUBULIN COFACTOR D"/>
    <property type="match status" value="1"/>
</dbReference>
<dbReference type="PANTHER" id="PTHR12658:SF0">
    <property type="entry name" value="TUBULIN-SPECIFIC CHAPERONE D"/>
    <property type="match status" value="1"/>
</dbReference>
<dbReference type="Pfam" id="PF23579">
    <property type="entry name" value="ARM_TBCD"/>
    <property type="match status" value="1"/>
</dbReference>
<dbReference type="Pfam" id="PF12612">
    <property type="entry name" value="TFCD_C"/>
    <property type="match status" value="1"/>
</dbReference>
<dbReference type="SUPFAM" id="SSF48371">
    <property type="entry name" value="ARM repeat"/>
    <property type="match status" value="2"/>
</dbReference>
<feature type="chain" id="PRO_0000436250" description="Tubulin-specific chaperone D" evidence="3">
    <location>
        <begin position="1"/>
        <end position="1163"/>
    </location>
</feature>
<name>TBCD_CAEEL</name>
<protein>
    <recommendedName>
        <fullName evidence="1">Tubulin-specific chaperone D</fullName>
    </recommendedName>
    <alternativeName>
        <fullName evidence="6">Tubulin folding cofactor D homolog</fullName>
    </alternativeName>
</protein>
<evidence type="ECO:0000250" key="1">
    <source>
        <dbReference type="UniProtKB" id="Q9BTW9"/>
    </source>
</evidence>
<evidence type="ECO:0000269" key="2">
    <source>
    </source>
</evidence>
<evidence type="ECO:0000305" key="3"/>
<evidence type="ECO:0000312" key="4">
    <source>
        <dbReference type="EMBL" id="CAB01496.2"/>
    </source>
</evidence>
<evidence type="ECO:0000312" key="5">
    <source>
        <dbReference type="Proteomes" id="UP000001940"/>
    </source>
</evidence>
<evidence type="ECO:0000312" key="6">
    <source>
        <dbReference type="WormBase" id="F16D3.4"/>
    </source>
</evidence>
<proteinExistence type="inferred from homology"/>
<keyword id="KW-0143">Chaperone</keyword>
<keyword id="KW-0493">Microtubule</keyword>
<keyword id="KW-1185">Reference proteome</keyword>
<organism evidence="5">
    <name type="scientific">Caenorhabditis elegans</name>
    <dbReference type="NCBI Taxonomy" id="6239"/>
    <lineage>
        <taxon>Eukaryota</taxon>
        <taxon>Metazoa</taxon>
        <taxon>Ecdysozoa</taxon>
        <taxon>Nematoda</taxon>
        <taxon>Chromadorea</taxon>
        <taxon>Rhabditida</taxon>
        <taxon>Rhabditina</taxon>
        <taxon>Rhabditomorpha</taxon>
        <taxon>Rhabditoidea</taxon>
        <taxon>Rhabditidae</taxon>
        <taxon>Peloderinae</taxon>
        <taxon>Caenorhabditis</taxon>
    </lineage>
</organism>
<accession>Q19493</accession>
<comment type="function">
    <text evidence="1 2">Tubulin-folding protein; involved in the first step of the tubulin folding pathway (By similarity). Plays a role in microtubule polymerization (PubMed:16054029).</text>
</comment>
<comment type="disruption phenotype">
    <text evidence="2">RNAi-mediated knockdown results in reduced microtubule growth rate.</text>
</comment>
<comment type="similarity">
    <text evidence="3">Belongs to the TBCD family.</text>
</comment>
<gene>
    <name evidence="6" type="primary">tbcd-1</name>
    <name evidence="6" type="ORF">F16D3.4</name>
</gene>